<proteinExistence type="inferred from homology"/>
<protein>
    <recommendedName>
        <fullName evidence="1">Large ribosomal subunit protein uL30</fullName>
    </recommendedName>
    <alternativeName>
        <fullName evidence="2">50S ribosomal protein L30</fullName>
    </alternativeName>
</protein>
<accession>Q7CFT2</accession>
<accession>Q74XY4</accession>
<gene>
    <name evidence="1" type="primary">rpmD</name>
    <name type="ordered locus">YPO0227</name>
    <name type="ordered locus">y4008</name>
    <name type="ordered locus">YP_0225</name>
</gene>
<comment type="subunit">
    <text evidence="1">Part of the 50S ribosomal subunit.</text>
</comment>
<comment type="similarity">
    <text evidence="1">Belongs to the universal ribosomal protein uL30 family.</text>
</comment>
<dbReference type="EMBL" id="AE009952">
    <property type="protein sequence ID" value="AAM87552.1"/>
    <property type="molecule type" value="Genomic_DNA"/>
</dbReference>
<dbReference type="EMBL" id="AL590842">
    <property type="protein sequence ID" value="CAL18910.1"/>
    <property type="molecule type" value="Genomic_DNA"/>
</dbReference>
<dbReference type="EMBL" id="AE017042">
    <property type="protein sequence ID" value="AAS60501.1"/>
    <property type="molecule type" value="Genomic_DNA"/>
</dbReference>
<dbReference type="PIR" id="AD0028">
    <property type="entry name" value="AD0028"/>
</dbReference>
<dbReference type="RefSeq" id="WP_002213339.1">
    <property type="nucleotide sequence ID" value="NZ_WUCM01000078.1"/>
</dbReference>
<dbReference type="RefSeq" id="YP_002345308.1">
    <property type="nucleotide sequence ID" value="NC_003143.1"/>
</dbReference>
<dbReference type="SMR" id="Q7CFT2"/>
<dbReference type="STRING" id="214092.YPO0227"/>
<dbReference type="PaxDb" id="214092-YPO0227"/>
<dbReference type="DNASU" id="1148955"/>
<dbReference type="EnsemblBacteria" id="AAS60501">
    <property type="protein sequence ID" value="AAS60501"/>
    <property type="gene ID" value="YP_0225"/>
</dbReference>
<dbReference type="GeneID" id="97454249"/>
<dbReference type="KEGG" id="ype:YPO0227"/>
<dbReference type="KEGG" id="ypk:y4008"/>
<dbReference type="KEGG" id="ypm:YP_0225"/>
<dbReference type="PATRIC" id="fig|214092.21.peg.456"/>
<dbReference type="eggNOG" id="COG1841">
    <property type="taxonomic scope" value="Bacteria"/>
</dbReference>
<dbReference type="HOGENOM" id="CLU_131047_1_4_6"/>
<dbReference type="OMA" id="KMHKTRE"/>
<dbReference type="OrthoDB" id="9812790at2"/>
<dbReference type="Proteomes" id="UP000000815">
    <property type="component" value="Chromosome"/>
</dbReference>
<dbReference type="Proteomes" id="UP000001019">
    <property type="component" value="Chromosome"/>
</dbReference>
<dbReference type="Proteomes" id="UP000002490">
    <property type="component" value="Chromosome"/>
</dbReference>
<dbReference type="GO" id="GO:0022625">
    <property type="term" value="C:cytosolic large ribosomal subunit"/>
    <property type="evidence" value="ECO:0000318"/>
    <property type="project" value="GO_Central"/>
</dbReference>
<dbReference type="GO" id="GO:0003735">
    <property type="term" value="F:structural constituent of ribosome"/>
    <property type="evidence" value="ECO:0007669"/>
    <property type="project" value="InterPro"/>
</dbReference>
<dbReference type="GO" id="GO:0006412">
    <property type="term" value="P:translation"/>
    <property type="evidence" value="ECO:0007669"/>
    <property type="project" value="UniProtKB-UniRule"/>
</dbReference>
<dbReference type="CDD" id="cd01658">
    <property type="entry name" value="Ribosomal_L30"/>
    <property type="match status" value="1"/>
</dbReference>
<dbReference type="FunFam" id="3.30.1390.20:FF:000001">
    <property type="entry name" value="50S ribosomal protein L30"/>
    <property type="match status" value="1"/>
</dbReference>
<dbReference type="Gene3D" id="3.30.1390.20">
    <property type="entry name" value="Ribosomal protein L30, ferredoxin-like fold domain"/>
    <property type="match status" value="1"/>
</dbReference>
<dbReference type="HAMAP" id="MF_01371_B">
    <property type="entry name" value="Ribosomal_uL30_B"/>
    <property type="match status" value="1"/>
</dbReference>
<dbReference type="InterPro" id="IPR036919">
    <property type="entry name" value="Ribo_uL30_ferredoxin-like_sf"/>
</dbReference>
<dbReference type="InterPro" id="IPR005996">
    <property type="entry name" value="Ribosomal_uL30_bac-type"/>
</dbReference>
<dbReference type="InterPro" id="IPR018038">
    <property type="entry name" value="Ribosomal_uL30_CS"/>
</dbReference>
<dbReference type="InterPro" id="IPR016082">
    <property type="entry name" value="Ribosomal_uL30_ferredoxin-like"/>
</dbReference>
<dbReference type="NCBIfam" id="TIGR01308">
    <property type="entry name" value="rpmD_bact"/>
    <property type="match status" value="1"/>
</dbReference>
<dbReference type="PANTHER" id="PTHR15892:SF2">
    <property type="entry name" value="LARGE RIBOSOMAL SUBUNIT PROTEIN UL30M"/>
    <property type="match status" value="1"/>
</dbReference>
<dbReference type="PANTHER" id="PTHR15892">
    <property type="entry name" value="MITOCHONDRIAL RIBOSOMAL PROTEIN L30"/>
    <property type="match status" value="1"/>
</dbReference>
<dbReference type="Pfam" id="PF00327">
    <property type="entry name" value="Ribosomal_L30"/>
    <property type="match status" value="1"/>
</dbReference>
<dbReference type="PIRSF" id="PIRSF002211">
    <property type="entry name" value="Ribosomal_L30_bac-type"/>
    <property type="match status" value="1"/>
</dbReference>
<dbReference type="SUPFAM" id="SSF55129">
    <property type="entry name" value="Ribosomal protein L30p/L7e"/>
    <property type="match status" value="1"/>
</dbReference>
<dbReference type="PROSITE" id="PS00634">
    <property type="entry name" value="RIBOSOMAL_L30"/>
    <property type="match status" value="1"/>
</dbReference>
<name>RL30_YERPE</name>
<reference key="1">
    <citation type="journal article" date="2002" name="J. Bacteriol.">
        <title>Genome sequence of Yersinia pestis KIM.</title>
        <authorList>
            <person name="Deng W."/>
            <person name="Burland V."/>
            <person name="Plunkett G. III"/>
            <person name="Boutin A."/>
            <person name="Mayhew G.F."/>
            <person name="Liss P."/>
            <person name="Perna N.T."/>
            <person name="Rose D.J."/>
            <person name="Mau B."/>
            <person name="Zhou S."/>
            <person name="Schwartz D.C."/>
            <person name="Fetherston J.D."/>
            <person name="Lindler L.E."/>
            <person name="Brubaker R.R."/>
            <person name="Plano G.V."/>
            <person name="Straley S.C."/>
            <person name="McDonough K.A."/>
            <person name="Nilles M.L."/>
            <person name="Matson J.S."/>
            <person name="Blattner F.R."/>
            <person name="Perry R.D."/>
        </authorList>
    </citation>
    <scope>NUCLEOTIDE SEQUENCE [LARGE SCALE GENOMIC DNA]</scope>
    <source>
        <strain>KIM10+ / Biovar Mediaevalis</strain>
    </source>
</reference>
<reference key="2">
    <citation type="journal article" date="2001" name="Nature">
        <title>Genome sequence of Yersinia pestis, the causative agent of plague.</title>
        <authorList>
            <person name="Parkhill J."/>
            <person name="Wren B.W."/>
            <person name="Thomson N.R."/>
            <person name="Titball R.W."/>
            <person name="Holden M.T.G."/>
            <person name="Prentice M.B."/>
            <person name="Sebaihia M."/>
            <person name="James K.D."/>
            <person name="Churcher C.M."/>
            <person name="Mungall K.L."/>
            <person name="Baker S."/>
            <person name="Basham D."/>
            <person name="Bentley S.D."/>
            <person name="Brooks K."/>
            <person name="Cerdeno-Tarraga A.-M."/>
            <person name="Chillingworth T."/>
            <person name="Cronin A."/>
            <person name="Davies R.M."/>
            <person name="Davis P."/>
            <person name="Dougan G."/>
            <person name="Feltwell T."/>
            <person name="Hamlin N."/>
            <person name="Holroyd S."/>
            <person name="Jagels K."/>
            <person name="Karlyshev A.V."/>
            <person name="Leather S."/>
            <person name="Moule S."/>
            <person name="Oyston P.C.F."/>
            <person name="Quail M.A."/>
            <person name="Rutherford K.M."/>
            <person name="Simmonds M."/>
            <person name="Skelton J."/>
            <person name="Stevens K."/>
            <person name="Whitehead S."/>
            <person name="Barrell B.G."/>
        </authorList>
    </citation>
    <scope>NUCLEOTIDE SEQUENCE [LARGE SCALE GENOMIC DNA]</scope>
    <source>
        <strain>CO-92 / Biovar Orientalis</strain>
    </source>
</reference>
<reference key="3">
    <citation type="journal article" date="2004" name="DNA Res.">
        <title>Complete genome sequence of Yersinia pestis strain 91001, an isolate avirulent to humans.</title>
        <authorList>
            <person name="Song Y."/>
            <person name="Tong Z."/>
            <person name="Wang J."/>
            <person name="Wang L."/>
            <person name="Guo Z."/>
            <person name="Han Y."/>
            <person name="Zhang J."/>
            <person name="Pei D."/>
            <person name="Zhou D."/>
            <person name="Qin H."/>
            <person name="Pang X."/>
            <person name="Han Y."/>
            <person name="Zhai J."/>
            <person name="Li M."/>
            <person name="Cui B."/>
            <person name="Qi Z."/>
            <person name="Jin L."/>
            <person name="Dai R."/>
            <person name="Chen F."/>
            <person name="Li S."/>
            <person name="Ye C."/>
            <person name="Du Z."/>
            <person name="Lin W."/>
            <person name="Wang J."/>
            <person name="Yu J."/>
            <person name="Yang H."/>
            <person name="Wang J."/>
            <person name="Huang P."/>
            <person name="Yang R."/>
        </authorList>
    </citation>
    <scope>NUCLEOTIDE SEQUENCE [LARGE SCALE GENOMIC DNA]</scope>
    <source>
        <strain>91001 / Biovar Mediaevalis</strain>
    </source>
</reference>
<sequence length="59" mass="6546">MAKTIKVTQTKSSIGRLPKHKATLIGLGLRRIGHTVEREDTPAVRGMVNLVSYMVKVEE</sequence>
<feature type="chain" id="PRO_0000273896" description="Large ribosomal subunit protein uL30">
    <location>
        <begin position="1"/>
        <end position="59"/>
    </location>
</feature>
<organism>
    <name type="scientific">Yersinia pestis</name>
    <dbReference type="NCBI Taxonomy" id="632"/>
    <lineage>
        <taxon>Bacteria</taxon>
        <taxon>Pseudomonadati</taxon>
        <taxon>Pseudomonadota</taxon>
        <taxon>Gammaproteobacteria</taxon>
        <taxon>Enterobacterales</taxon>
        <taxon>Yersiniaceae</taxon>
        <taxon>Yersinia</taxon>
    </lineage>
</organism>
<keyword id="KW-1185">Reference proteome</keyword>
<keyword id="KW-0687">Ribonucleoprotein</keyword>
<keyword id="KW-0689">Ribosomal protein</keyword>
<evidence type="ECO:0000255" key="1">
    <source>
        <dbReference type="HAMAP-Rule" id="MF_01371"/>
    </source>
</evidence>
<evidence type="ECO:0000305" key="2"/>